<reference key="1">
    <citation type="journal article" date="2009" name="PLoS ONE">
        <title>The complete genome of Teredinibacter turnerae T7901: an intracellular endosymbiont of marine wood-boring bivalves (shipworms).</title>
        <authorList>
            <person name="Yang J.C."/>
            <person name="Madupu R."/>
            <person name="Durkin A.S."/>
            <person name="Ekborg N.A."/>
            <person name="Pedamallu C.S."/>
            <person name="Hostetler J.B."/>
            <person name="Radune D."/>
            <person name="Toms B.S."/>
            <person name="Henrissat B."/>
            <person name="Coutinho P.M."/>
            <person name="Schwarz S."/>
            <person name="Field L."/>
            <person name="Trindade-Silva A.E."/>
            <person name="Soares C.A.G."/>
            <person name="Elshahawi S."/>
            <person name="Hanora A."/>
            <person name="Schmidt E.W."/>
            <person name="Haygood M.G."/>
            <person name="Posfai J."/>
            <person name="Benner J."/>
            <person name="Madinger C."/>
            <person name="Nove J."/>
            <person name="Anton B."/>
            <person name="Chaudhary K."/>
            <person name="Foster J."/>
            <person name="Holman A."/>
            <person name="Kumar S."/>
            <person name="Lessard P.A."/>
            <person name="Luyten Y.A."/>
            <person name="Slatko B."/>
            <person name="Wood N."/>
            <person name="Wu B."/>
            <person name="Teplitski M."/>
            <person name="Mougous J.D."/>
            <person name="Ward N."/>
            <person name="Eisen J.A."/>
            <person name="Badger J.H."/>
            <person name="Distel D.L."/>
        </authorList>
    </citation>
    <scope>NUCLEOTIDE SEQUENCE [LARGE SCALE GENOMIC DNA]</scope>
    <source>
        <strain>ATCC 39867 / T7901</strain>
    </source>
</reference>
<feature type="chain" id="PRO_1000202600" description="Peptidyl-tRNA hydrolase">
    <location>
        <begin position="1"/>
        <end position="193"/>
    </location>
</feature>
<feature type="active site" description="Proton acceptor" evidence="1">
    <location>
        <position position="23"/>
    </location>
</feature>
<feature type="binding site" evidence="1">
    <location>
        <position position="18"/>
    </location>
    <ligand>
        <name>tRNA</name>
        <dbReference type="ChEBI" id="CHEBI:17843"/>
    </ligand>
</feature>
<feature type="binding site" evidence="1">
    <location>
        <position position="69"/>
    </location>
    <ligand>
        <name>tRNA</name>
        <dbReference type="ChEBI" id="CHEBI:17843"/>
    </ligand>
</feature>
<feature type="binding site" evidence="1">
    <location>
        <position position="71"/>
    </location>
    <ligand>
        <name>tRNA</name>
        <dbReference type="ChEBI" id="CHEBI:17843"/>
    </ligand>
</feature>
<feature type="binding site" evidence="1">
    <location>
        <position position="117"/>
    </location>
    <ligand>
        <name>tRNA</name>
        <dbReference type="ChEBI" id="CHEBI:17843"/>
    </ligand>
</feature>
<feature type="site" description="Discriminates between blocked and unblocked aminoacyl-tRNA" evidence="1">
    <location>
        <position position="13"/>
    </location>
</feature>
<feature type="site" description="Stabilizes the basic form of H active site to accept a proton" evidence="1">
    <location>
        <position position="96"/>
    </location>
</feature>
<gene>
    <name evidence="1" type="primary">pth</name>
    <name type="ordered locus">TERTU_3853</name>
</gene>
<protein>
    <recommendedName>
        <fullName evidence="1">Peptidyl-tRNA hydrolase</fullName>
        <shortName evidence="1">Pth</shortName>
        <ecNumber evidence="1">3.1.1.29</ecNumber>
    </recommendedName>
</protein>
<comment type="function">
    <text evidence="1">Hydrolyzes ribosome-free peptidyl-tRNAs (with 1 or more amino acids incorporated), which drop off the ribosome during protein synthesis, or as a result of ribosome stalling.</text>
</comment>
<comment type="function">
    <text evidence="1">Catalyzes the release of premature peptidyl moieties from peptidyl-tRNA molecules trapped in stalled 50S ribosomal subunits, and thus maintains levels of free tRNAs and 50S ribosomes.</text>
</comment>
<comment type="catalytic activity">
    <reaction evidence="1">
        <text>an N-acyl-L-alpha-aminoacyl-tRNA + H2O = an N-acyl-L-amino acid + a tRNA + H(+)</text>
        <dbReference type="Rhea" id="RHEA:54448"/>
        <dbReference type="Rhea" id="RHEA-COMP:10123"/>
        <dbReference type="Rhea" id="RHEA-COMP:13883"/>
        <dbReference type="ChEBI" id="CHEBI:15377"/>
        <dbReference type="ChEBI" id="CHEBI:15378"/>
        <dbReference type="ChEBI" id="CHEBI:59874"/>
        <dbReference type="ChEBI" id="CHEBI:78442"/>
        <dbReference type="ChEBI" id="CHEBI:138191"/>
        <dbReference type="EC" id="3.1.1.29"/>
    </reaction>
</comment>
<comment type="subunit">
    <text evidence="1">Monomer.</text>
</comment>
<comment type="subcellular location">
    <subcellularLocation>
        <location evidence="1">Cytoplasm</location>
    </subcellularLocation>
</comment>
<comment type="similarity">
    <text evidence="1">Belongs to the PTH family.</text>
</comment>
<accession>C5BT03</accession>
<proteinExistence type="inferred from homology"/>
<keyword id="KW-0963">Cytoplasm</keyword>
<keyword id="KW-0378">Hydrolase</keyword>
<keyword id="KW-1185">Reference proteome</keyword>
<keyword id="KW-0694">RNA-binding</keyword>
<keyword id="KW-0820">tRNA-binding</keyword>
<dbReference type="EC" id="3.1.1.29" evidence="1"/>
<dbReference type="EMBL" id="CP001614">
    <property type="protein sequence ID" value="ACR14529.1"/>
    <property type="molecule type" value="Genomic_DNA"/>
</dbReference>
<dbReference type="RefSeq" id="WP_015820643.1">
    <property type="nucleotide sequence ID" value="NC_012997.1"/>
</dbReference>
<dbReference type="SMR" id="C5BT03"/>
<dbReference type="STRING" id="377629.TERTU_3853"/>
<dbReference type="KEGG" id="ttu:TERTU_3853"/>
<dbReference type="eggNOG" id="COG0193">
    <property type="taxonomic scope" value="Bacteria"/>
</dbReference>
<dbReference type="HOGENOM" id="CLU_062456_3_1_6"/>
<dbReference type="OrthoDB" id="9800507at2"/>
<dbReference type="Proteomes" id="UP000009080">
    <property type="component" value="Chromosome"/>
</dbReference>
<dbReference type="GO" id="GO:0005737">
    <property type="term" value="C:cytoplasm"/>
    <property type="evidence" value="ECO:0007669"/>
    <property type="project" value="UniProtKB-SubCell"/>
</dbReference>
<dbReference type="GO" id="GO:0004045">
    <property type="term" value="F:peptidyl-tRNA hydrolase activity"/>
    <property type="evidence" value="ECO:0007669"/>
    <property type="project" value="UniProtKB-UniRule"/>
</dbReference>
<dbReference type="GO" id="GO:0000049">
    <property type="term" value="F:tRNA binding"/>
    <property type="evidence" value="ECO:0007669"/>
    <property type="project" value="UniProtKB-UniRule"/>
</dbReference>
<dbReference type="GO" id="GO:0006515">
    <property type="term" value="P:protein quality control for misfolded or incompletely synthesized proteins"/>
    <property type="evidence" value="ECO:0007669"/>
    <property type="project" value="UniProtKB-UniRule"/>
</dbReference>
<dbReference type="GO" id="GO:0072344">
    <property type="term" value="P:rescue of stalled ribosome"/>
    <property type="evidence" value="ECO:0007669"/>
    <property type="project" value="UniProtKB-UniRule"/>
</dbReference>
<dbReference type="CDD" id="cd00462">
    <property type="entry name" value="PTH"/>
    <property type="match status" value="1"/>
</dbReference>
<dbReference type="FunFam" id="3.40.50.1470:FF:000001">
    <property type="entry name" value="Peptidyl-tRNA hydrolase"/>
    <property type="match status" value="1"/>
</dbReference>
<dbReference type="Gene3D" id="3.40.50.1470">
    <property type="entry name" value="Peptidyl-tRNA hydrolase"/>
    <property type="match status" value="1"/>
</dbReference>
<dbReference type="HAMAP" id="MF_00083">
    <property type="entry name" value="Pept_tRNA_hydro_bact"/>
    <property type="match status" value="1"/>
</dbReference>
<dbReference type="InterPro" id="IPR001328">
    <property type="entry name" value="Pept_tRNA_hydro"/>
</dbReference>
<dbReference type="InterPro" id="IPR018171">
    <property type="entry name" value="Pept_tRNA_hydro_CS"/>
</dbReference>
<dbReference type="InterPro" id="IPR036416">
    <property type="entry name" value="Pept_tRNA_hydro_sf"/>
</dbReference>
<dbReference type="NCBIfam" id="TIGR00447">
    <property type="entry name" value="pth"/>
    <property type="match status" value="1"/>
</dbReference>
<dbReference type="PANTHER" id="PTHR17224">
    <property type="entry name" value="PEPTIDYL-TRNA HYDROLASE"/>
    <property type="match status" value="1"/>
</dbReference>
<dbReference type="PANTHER" id="PTHR17224:SF1">
    <property type="entry name" value="PEPTIDYL-TRNA HYDROLASE"/>
    <property type="match status" value="1"/>
</dbReference>
<dbReference type="Pfam" id="PF01195">
    <property type="entry name" value="Pept_tRNA_hydro"/>
    <property type="match status" value="1"/>
</dbReference>
<dbReference type="SUPFAM" id="SSF53178">
    <property type="entry name" value="Peptidyl-tRNA hydrolase-like"/>
    <property type="match status" value="1"/>
</dbReference>
<dbReference type="PROSITE" id="PS01195">
    <property type="entry name" value="PEPT_TRNA_HYDROL_1"/>
    <property type="match status" value="1"/>
</dbReference>
<dbReference type="PROSITE" id="PS01196">
    <property type="entry name" value="PEPT_TRNA_HYDROL_2"/>
    <property type="match status" value="1"/>
</dbReference>
<name>PTH_TERTT</name>
<evidence type="ECO:0000255" key="1">
    <source>
        <dbReference type="HAMAP-Rule" id="MF_00083"/>
    </source>
</evidence>
<sequence length="193" mass="20768">MRNPVSMIVGLGNPGTEYANTRHNAGQDFVENLARALGQPLVNTPKHFGFTTRISLAGKDVRLLVPTTFMNRSGQAVASLANFFKIAPDNILVVHDELDLPPGTAKLKIGGGHGGHNGLRDIIAALGNNKEFGRLRIGIGHPGNAKQVASYVLKKAPADEYRLIEDAQTAAERTLTDLVAGDWEKAMRELHTA</sequence>
<organism>
    <name type="scientific">Teredinibacter turnerae (strain ATCC 39867 / T7901)</name>
    <dbReference type="NCBI Taxonomy" id="377629"/>
    <lineage>
        <taxon>Bacteria</taxon>
        <taxon>Pseudomonadati</taxon>
        <taxon>Pseudomonadota</taxon>
        <taxon>Gammaproteobacteria</taxon>
        <taxon>Cellvibrionales</taxon>
        <taxon>Cellvibrionaceae</taxon>
        <taxon>Teredinibacter</taxon>
    </lineage>
</organism>